<dbReference type="EMBL" id="AE008384">
    <property type="protein sequence ID" value="AAM31710.1"/>
    <property type="status" value="ALT_INIT"/>
    <property type="molecule type" value="Genomic_DNA"/>
</dbReference>
<dbReference type="SMR" id="Q8PVF1"/>
<dbReference type="KEGG" id="mma:MM_2014"/>
<dbReference type="PATRIC" id="fig|192952.21.peg.2316"/>
<dbReference type="eggNOG" id="arCOG01179">
    <property type="taxonomic scope" value="Archaea"/>
</dbReference>
<dbReference type="HOGENOM" id="CLU_109098_1_2_2"/>
<dbReference type="Proteomes" id="UP000000595">
    <property type="component" value="Chromosome"/>
</dbReference>
<dbReference type="GO" id="GO:0003723">
    <property type="term" value="F:RNA binding"/>
    <property type="evidence" value="ECO:0007669"/>
    <property type="project" value="InterPro"/>
</dbReference>
<dbReference type="GO" id="GO:0003743">
    <property type="term" value="F:translation initiation factor activity"/>
    <property type="evidence" value="ECO:0007669"/>
    <property type="project" value="UniProtKB-UniRule"/>
</dbReference>
<dbReference type="CDD" id="cd05793">
    <property type="entry name" value="S1_IF1A"/>
    <property type="match status" value="1"/>
</dbReference>
<dbReference type="Gene3D" id="2.40.50.140">
    <property type="entry name" value="Nucleic acid-binding proteins"/>
    <property type="match status" value="1"/>
</dbReference>
<dbReference type="HAMAP" id="MF_00216">
    <property type="entry name" value="aIF_1A"/>
    <property type="match status" value="1"/>
</dbReference>
<dbReference type="InterPro" id="IPR012340">
    <property type="entry name" value="NA-bd_OB-fold"/>
</dbReference>
<dbReference type="InterPro" id="IPR006196">
    <property type="entry name" value="RNA-binding_domain_S1_IF1"/>
</dbReference>
<dbReference type="InterPro" id="IPR001253">
    <property type="entry name" value="TIF_eIF-1A"/>
</dbReference>
<dbReference type="InterPro" id="IPR018104">
    <property type="entry name" value="TIF_eIF-1A_CS"/>
</dbReference>
<dbReference type="NCBIfam" id="TIGR00523">
    <property type="entry name" value="eIF-1A"/>
    <property type="match status" value="1"/>
</dbReference>
<dbReference type="NCBIfam" id="NF003084">
    <property type="entry name" value="PRK04012.1-3"/>
    <property type="match status" value="1"/>
</dbReference>
<dbReference type="NCBIfam" id="NF003085">
    <property type="entry name" value="PRK04012.1-5"/>
    <property type="match status" value="1"/>
</dbReference>
<dbReference type="PANTHER" id="PTHR21668">
    <property type="entry name" value="EIF-1A"/>
    <property type="match status" value="1"/>
</dbReference>
<dbReference type="Pfam" id="PF01176">
    <property type="entry name" value="eIF-1a"/>
    <property type="match status" value="1"/>
</dbReference>
<dbReference type="SMART" id="SM00652">
    <property type="entry name" value="eIF1a"/>
    <property type="match status" value="1"/>
</dbReference>
<dbReference type="SUPFAM" id="SSF50249">
    <property type="entry name" value="Nucleic acid-binding proteins"/>
    <property type="match status" value="1"/>
</dbReference>
<dbReference type="PROSITE" id="PS01262">
    <property type="entry name" value="IF1A"/>
    <property type="match status" value="1"/>
</dbReference>
<dbReference type="PROSITE" id="PS50832">
    <property type="entry name" value="S1_IF1_TYPE"/>
    <property type="match status" value="1"/>
</dbReference>
<gene>
    <name type="primary">eIF1A1</name>
    <name type="ordered locus">MM_2014</name>
</gene>
<reference key="1">
    <citation type="journal article" date="2002" name="J. Mol. Microbiol. Biotechnol.">
        <title>The genome of Methanosarcina mazei: evidence for lateral gene transfer between Bacteria and Archaea.</title>
        <authorList>
            <person name="Deppenmeier U."/>
            <person name="Johann A."/>
            <person name="Hartsch T."/>
            <person name="Merkl R."/>
            <person name="Schmitz R.A."/>
            <person name="Martinez-Arias R."/>
            <person name="Henne A."/>
            <person name="Wiezer A."/>
            <person name="Baeumer S."/>
            <person name="Jacobi C."/>
            <person name="Brueggemann H."/>
            <person name="Lienard T."/>
            <person name="Christmann A."/>
            <person name="Boemecke M."/>
            <person name="Steckel S."/>
            <person name="Bhattacharyya A."/>
            <person name="Lykidis A."/>
            <person name="Overbeek R."/>
            <person name="Klenk H.-P."/>
            <person name="Gunsalus R.P."/>
            <person name="Fritz H.-J."/>
            <person name="Gottschalk G."/>
        </authorList>
    </citation>
    <scope>NUCLEOTIDE SEQUENCE [LARGE SCALE GENOMIC DNA]</scope>
    <source>
        <strain>ATCC BAA-159 / DSM 3647 / Goe1 / Go1 / JCM 11833 / OCM 88</strain>
    </source>
</reference>
<protein>
    <recommendedName>
        <fullName>Translation initiation factor 1A 1</fullName>
        <shortName>aIF-1A 1</shortName>
    </recommendedName>
</protein>
<evidence type="ECO:0000250" key="1"/>
<evidence type="ECO:0000256" key="2">
    <source>
        <dbReference type="SAM" id="MobiDB-lite"/>
    </source>
</evidence>
<evidence type="ECO:0000305" key="3"/>
<proteinExistence type="inferred from homology"/>
<accession>Q8PVF1</accession>
<feature type="chain" id="PRO_0000145123" description="Translation initiation factor 1A 1">
    <location>
        <begin position="1"/>
        <end position="111"/>
    </location>
</feature>
<feature type="domain" description="S1-like">
    <location>
        <begin position="22"/>
        <end position="96"/>
    </location>
</feature>
<feature type="region of interest" description="Disordered" evidence="2">
    <location>
        <begin position="1"/>
        <end position="28"/>
    </location>
</feature>
<name>IF1A1_METMA</name>
<keyword id="KW-0396">Initiation factor</keyword>
<keyword id="KW-0648">Protein biosynthesis</keyword>
<organism>
    <name type="scientific">Methanosarcina mazei (strain ATCC BAA-159 / DSM 3647 / Goe1 / Go1 / JCM 11833 / OCM 88)</name>
    <name type="common">Methanosarcina frisia</name>
    <dbReference type="NCBI Taxonomy" id="192952"/>
    <lineage>
        <taxon>Archaea</taxon>
        <taxon>Methanobacteriati</taxon>
        <taxon>Methanobacteriota</taxon>
        <taxon>Stenosarchaea group</taxon>
        <taxon>Methanomicrobia</taxon>
        <taxon>Methanosarcinales</taxon>
        <taxon>Methanosarcinaceae</taxon>
        <taxon>Methanosarcina</taxon>
    </lineage>
</organism>
<sequence>MTLADLKKPTSRASPSTEETVTRVRTPRRENNEILATVESLLGANRLRLRCMDGVVRMGRIPGSMKKKAWIREGDVVIAVPWEFQNEKADVIWKYTRPQVDWLERKGYLKG</sequence>
<comment type="function">
    <text evidence="1">Seems to be required for maximal rate of protein biosynthesis. Enhances ribosome dissociation into subunits and stabilizes the binding of the initiator Met-tRNA(I) to 40 S ribosomal subunits (By similarity).</text>
</comment>
<comment type="similarity">
    <text evidence="3">Belongs to the eIF-1A family.</text>
</comment>
<comment type="sequence caution" evidence="3">
    <conflict type="erroneous initiation">
        <sequence resource="EMBL-CDS" id="AAM31710"/>
    </conflict>
</comment>